<name>VKT2F_RADCR</name>
<evidence type="ECO:0000250" key="1">
    <source>
        <dbReference type="UniProtKB" id="P00974"/>
    </source>
</evidence>
<evidence type="ECO:0000250" key="2">
    <source>
        <dbReference type="UniProtKB" id="P31713"/>
    </source>
</evidence>
<evidence type="ECO:0000255" key="3">
    <source>
        <dbReference type="PROSITE-ProRule" id="PRU00031"/>
    </source>
</evidence>
<evidence type="ECO:0000269" key="4">
    <source>
    </source>
</evidence>
<evidence type="ECO:0000269" key="5">
    <source>
    </source>
</evidence>
<evidence type="ECO:0000303" key="6">
    <source>
    </source>
</evidence>
<evidence type="ECO:0000303" key="7">
    <source>
    </source>
</evidence>
<evidence type="ECO:0000305" key="8"/>
<protein>
    <recommendedName>
        <fullName evidence="8">PI-stichotoxin-Hcr2f</fullName>
        <shortName evidence="8">PI-SHTX-Hcr2f</shortName>
    </recommendedName>
    <alternativeName>
        <fullName evidence="6 7">Kunitz-type serine protease inhibitor HCRG1</fullName>
    </alternativeName>
</protein>
<dbReference type="SMR" id="C0HJU6"/>
<dbReference type="GO" id="GO:0005615">
    <property type="term" value="C:extracellular space"/>
    <property type="evidence" value="ECO:0007669"/>
    <property type="project" value="TreeGrafter"/>
</dbReference>
<dbReference type="GO" id="GO:0042151">
    <property type="term" value="C:nematocyst"/>
    <property type="evidence" value="ECO:0007669"/>
    <property type="project" value="UniProtKB-SubCell"/>
</dbReference>
<dbReference type="GO" id="GO:0015459">
    <property type="term" value="F:potassium channel regulator activity"/>
    <property type="evidence" value="ECO:0007669"/>
    <property type="project" value="UniProtKB-KW"/>
</dbReference>
<dbReference type="GO" id="GO:0004867">
    <property type="term" value="F:serine-type endopeptidase inhibitor activity"/>
    <property type="evidence" value="ECO:0007669"/>
    <property type="project" value="UniProtKB-KW"/>
</dbReference>
<dbReference type="GO" id="GO:0090729">
    <property type="term" value="F:toxin activity"/>
    <property type="evidence" value="ECO:0007669"/>
    <property type="project" value="UniProtKB-KW"/>
</dbReference>
<dbReference type="CDD" id="cd22618">
    <property type="entry name" value="Kunitz_SHPI"/>
    <property type="match status" value="1"/>
</dbReference>
<dbReference type="FunFam" id="4.10.410.10:FF:000021">
    <property type="entry name" value="Serine protease inhibitor, putative"/>
    <property type="match status" value="1"/>
</dbReference>
<dbReference type="Gene3D" id="4.10.410.10">
    <property type="entry name" value="Pancreatic trypsin inhibitor Kunitz domain"/>
    <property type="match status" value="1"/>
</dbReference>
<dbReference type="InterPro" id="IPR002223">
    <property type="entry name" value="Kunitz_BPTI"/>
</dbReference>
<dbReference type="InterPro" id="IPR036880">
    <property type="entry name" value="Kunitz_BPTI_sf"/>
</dbReference>
<dbReference type="InterPro" id="IPR020901">
    <property type="entry name" value="Prtase_inh_Kunz-CS"/>
</dbReference>
<dbReference type="InterPro" id="IPR050098">
    <property type="entry name" value="TFPI/VKTCI-like"/>
</dbReference>
<dbReference type="PANTHER" id="PTHR10083:SF374">
    <property type="entry name" value="BPTI_KUNITZ INHIBITOR DOMAIN-CONTAINING PROTEIN"/>
    <property type="match status" value="1"/>
</dbReference>
<dbReference type="PANTHER" id="PTHR10083">
    <property type="entry name" value="KUNITZ-TYPE PROTEASE INHIBITOR-RELATED"/>
    <property type="match status" value="1"/>
</dbReference>
<dbReference type="Pfam" id="PF00014">
    <property type="entry name" value="Kunitz_BPTI"/>
    <property type="match status" value="1"/>
</dbReference>
<dbReference type="PRINTS" id="PR00759">
    <property type="entry name" value="BASICPTASE"/>
</dbReference>
<dbReference type="SMART" id="SM00131">
    <property type="entry name" value="KU"/>
    <property type="match status" value="1"/>
</dbReference>
<dbReference type="SUPFAM" id="SSF57362">
    <property type="entry name" value="BPTI-like"/>
    <property type="match status" value="1"/>
</dbReference>
<dbReference type="PROSITE" id="PS00280">
    <property type="entry name" value="BPTI_KUNITZ_1"/>
    <property type="match status" value="1"/>
</dbReference>
<dbReference type="PROSITE" id="PS50279">
    <property type="entry name" value="BPTI_KUNITZ_2"/>
    <property type="match status" value="1"/>
</dbReference>
<feature type="chain" id="PRO_0000434949" description="PI-stichotoxin-Hcr2f" evidence="4">
    <location>
        <begin position="1"/>
        <end position="56"/>
    </location>
</feature>
<feature type="domain" description="BPTI/Kunitz inhibitor" evidence="3">
    <location>
        <begin position="4"/>
        <end position="54"/>
    </location>
</feature>
<feature type="site" description="Reactive bond for trypsin" evidence="1">
    <location>
        <begin position="14"/>
        <end position="15"/>
    </location>
</feature>
<feature type="disulfide bond" evidence="2">
    <location>
        <begin position="4"/>
        <end position="54"/>
    </location>
</feature>
<feature type="disulfide bond" evidence="2">
    <location>
        <begin position="13"/>
        <end position="37"/>
    </location>
</feature>
<feature type="disulfide bond" evidence="2">
    <location>
        <begin position="29"/>
        <end position="50"/>
    </location>
</feature>
<organism>
    <name type="scientific">Radianthus crispa</name>
    <name type="common">Leathery sea anemone</name>
    <name type="synonym">Heteractis crispa</name>
    <dbReference type="NCBI Taxonomy" id="3122430"/>
    <lineage>
        <taxon>Eukaryota</taxon>
        <taxon>Metazoa</taxon>
        <taxon>Cnidaria</taxon>
        <taxon>Anthozoa</taxon>
        <taxon>Hexacorallia</taxon>
        <taxon>Actiniaria</taxon>
        <taxon>Stichodactylidae</taxon>
        <taxon>Radianthus</taxon>
    </lineage>
</organism>
<reference key="1">
    <citation type="journal article" date="2015" name="Mar. Drugs">
        <title>New Kunitz-type HCRG polypeptides from the sea anemone Heteractis crispa.</title>
        <authorList>
            <person name="Gladkikh I."/>
            <person name="Monastyrnaya M."/>
            <person name="Zelepuga E."/>
            <person name="Sintsova O."/>
            <person name="Tabakmakher V."/>
            <person name="Gnedenko O."/>
            <person name="Ivanov A."/>
            <person name="Hua K.F."/>
            <person name="Kozlovskaya E."/>
        </authorList>
    </citation>
    <scope>PROTEIN SEQUENCE</scope>
    <scope>FUNCTION</scope>
    <scope>SUBCELLULAR LOCATION</scope>
    <scope>MASS SPECTROMETRY</scope>
    <scope>DISULFIDE BONDS</scope>
</reference>
<reference key="2">
    <citation type="journal article" date="2020" name="Biomedicines">
        <title>Kunitz-type peptides from the sea anemone Heteractis crispa demonstrate potassium channel blocking and anti-inflammatory activities.</title>
        <authorList>
            <person name="Gladkikh I."/>
            <person name="Peigneur S."/>
            <person name="Sintsova O."/>
            <person name="Lopes Pinheiro-Junior E."/>
            <person name="Klimovich A."/>
            <person name="Menshov A."/>
            <person name="Kalinovsky A."/>
            <person name="Isaeva M."/>
            <person name="Monastyrnaya M."/>
            <person name="Kozlovskaya E."/>
            <person name="Tytgat J."/>
            <person name="Leychenko E."/>
        </authorList>
    </citation>
    <scope>FUNCTION</scope>
    <scope>MASS SPECTROMETRY</scope>
    <scope>3D-STRUCTURE MODELING</scope>
</reference>
<reference key="3">
    <citation type="journal article" date="2021" name="Biomedicines">
        <title>Sea anemone kunitz-type peptides demonstrate neuroprotective activity in the 6-hydroxydopamine induced neurotoxicity model.</title>
        <authorList>
            <person name="Sintsova O."/>
            <person name="Gladkikh I."/>
            <person name="Monastyrnaya M."/>
            <person name="Tabakmakher V."/>
            <person name="Yurchenko E."/>
            <person name="Menchinskaya E."/>
            <person name="Pislyagin E."/>
            <person name="Andreev Y."/>
            <person name="Kozlov S."/>
            <person name="Peigneur S."/>
            <person name="Tytgat J."/>
            <person name="Aminin D."/>
            <person name="Kozlovskaya E."/>
            <person name="Leychenko E."/>
        </authorList>
    </citation>
    <scope>FUNCTION</scope>
</reference>
<accession>C0HJU6</accession>
<proteinExistence type="evidence at protein level"/>
<sequence length="56" mass="6202">RGICSEPKVVGPCKAGLRRFYYDSETGECKPFIYGGCKGNKNNFETLHACRGICRA</sequence>
<comment type="function">
    <text evidence="4 5">Dual-function toxin that inhibits both serine proteases and voltage-gated potassium channels (PubMed:26404319, PubMed:33158163). Has potent activity on both trypsin (Ki=28 nM) and chymotrypsin (Kd=1.8 nM) (PubMed:26404319). Shows inhibitory activity against 4 of the 7 potassium channels tested (rKv1.1/KCNA1; IC(50)=142.6 nM, hKv1.3/KCNA3; IC(50)=40.7 nM, rKv1.6/KCNA6; IC(50)=154.9 nM and drosophila Shaker; IC(50)=433.1 nM) (PubMed:33158163). Has an anti-inflammatory effect in LPS-activated macrophages in vitro, specifically reducing release of TNF and IL6 but not nitric oxide and reducing expression of IL1B precursor (PubMed:26404319). In contrast to some paralogs, this protein decreases reactive oxygen species (ROS) level in the oxidative stress agent 6-hydroxydopamine (6-OHDA)-induced neurotoxicity model, but does not show cytoprotective activity on neuroblastoma cells (PubMed:33802055). This protein also shows a weak free-radical scavenging activity (PubMed:33802055). In vivo, when tested in a mice model of acute local inflammation, it reduces paw edema during 24 hours. In addition, it also reduces the synthesis of TNF in this model (PubMed:33158163).</text>
</comment>
<comment type="subcellular location">
    <subcellularLocation>
        <location evidence="4">Secreted</location>
    </subcellularLocation>
    <subcellularLocation>
        <location evidence="4">Nematocyst</location>
    </subcellularLocation>
</comment>
<comment type="PTM">
    <text evidence="4">Contains 3 disulfide bonds.</text>
</comment>
<comment type="mass spectrometry" mass="6196.0" method="MALDI" evidence="4 5"/>
<comment type="miscellaneous">
    <text evidence="4 5">Negative results: does not bind to and, hence, probably does not inhibit serine proteases plasmin, kallikrein and thrombin (PubMed:26404319). Has no or weak activity on hKv1.2/KCNA2 (IC(50)=52 uM), rKv1.4/KCNA4 and rKv1.5/KCNA5 (PubMed:33158163).</text>
</comment>
<comment type="miscellaneous">
    <text evidence="8">A synonymy between H.magnifica and R.crispa is controversial.</text>
</comment>
<comment type="similarity">
    <text evidence="8">Belongs to the venom Kunitz-type family. Sea anemone type 2 potassium channel toxin subfamily.</text>
</comment>
<keyword id="KW-0903">Direct protein sequencing</keyword>
<keyword id="KW-1015">Disulfide bond</keyword>
<keyword id="KW-0872">Ion channel impairing toxin</keyword>
<keyword id="KW-0166">Nematocyst</keyword>
<keyword id="KW-0632">Potassium channel impairing toxin</keyword>
<keyword id="KW-0646">Protease inhibitor</keyword>
<keyword id="KW-0964">Secreted</keyword>
<keyword id="KW-0722">Serine protease inhibitor</keyword>
<keyword id="KW-0800">Toxin</keyword>
<keyword id="KW-1220">Voltage-gated potassium channel impairing toxin</keyword>